<evidence type="ECO:0000250" key="1"/>
<evidence type="ECO:0000250" key="2">
    <source>
        <dbReference type="UniProtKB" id="P97346"/>
    </source>
</evidence>
<evidence type="ECO:0000255" key="3">
    <source>
        <dbReference type="PROSITE-ProRule" id="PRU00691"/>
    </source>
</evidence>
<evidence type="ECO:0000269" key="4">
    <source>
    </source>
</evidence>
<evidence type="ECO:0000303" key="5">
    <source>
    </source>
</evidence>
<evidence type="ECO:0000303" key="6">
    <source>
    </source>
</evidence>
<evidence type="ECO:0000305" key="7"/>
<evidence type="ECO:0007744" key="8">
    <source>
    </source>
</evidence>
<organism>
    <name type="scientific">Homo sapiens</name>
    <name type="common">Human</name>
    <dbReference type="NCBI Taxonomy" id="9606"/>
    <lineage>
        <taxon>Eukaryota</taxon>
        <taxon>Metazoa</taxon>
        <taxon>Chordata</taxon>
        <taxon>Craniata</taxon>
        <taxon>Vertebrata</taxon>
        <taxon>Euteleostomi</taxon>
        <taxon>Mammalia</taxon>
        <taxon>Eutheria</taxon>
        <taxon>Euarchontoglires</taxon>
        <taxon>Primates</taxon>
        <taxon>Haplorrhini</taxon>
        <taxon>Catarrhini</taxon>
        <taxon>Hominidae</taxon>
        <taxon>Homo</taxon>
    </lineage>
</organism>
<keyword id="KW-0007">Acetylation</keyword>
<keyword id="KW-0025">Alternative splicing</keyword>
<keyword id="KW-0963">Cytoplasm</keyword>
<keyword id="KW-0217">Developmental protein</keyword>
<keyword id="KW-0221">Differentiation</keyword>
<keyword id="KW-0225">Disease variant</keyword>
<keyword id="KW-0242">Dwarfism</keyword>
<keyword id="KW-0520">NAD</keyword>
<keyword id="KW-0539">Nucleus</keyword>
<keyword id="KW-0560">Oxidoreductase</keyword>
<keyword id="KW-1267">Proteomics identification</keyword>
<keyword id="KW-1185">Reference proteome</keyword>
<keyword id="KW-0879">Wnt signaling pathway</keyword>
<accession>Q6DKJ4</accession>
<accession>B4DXQ0</accession>
<accession>D3DTH2</accession>
<accession>Q3SWW6</accession>
<accession>Q6P3U6</accession>
<accession>Q7L4C6</accession>
<accession>Q9H9Q1</accession>
<gene>
    <name type="primary">NXN</name>
    <name type="synonym">NRX</name>
</gene>
<comment type="function">
    <text evidence="2">Functions as a redox-dependent negative regulator of the Wnt signaling pathway, possibly by preventing ubiquitination of DVL3 by the BCR(KLHL12) complex. May also function as a transcriptional regulator act as a regulator of protein phosphatase 2A (PP2A) (By similarity).</text>
</comment>
<comment type="catalytic activity">
    <reaction>
        <text>[protein]-dithiol + NAD(+) = [protein]-disulfide + NADH + H(+)</text>
        <dbReference type="Rhea" id="RHEA:18749"/>
        <dbReference type="Rhea" id="RHEA-COMP:10593"/>
        <dbReference type="Rhea" id="RHEA-COMP:10594"/>
        <dbReference type="ChEBI" id="CHEBI:15378"/>
        <dbReference type="ChEBI" id="CHEBI:29950"/>
        <dbReference type="ChEBI" id="CHEBI:50058"/>
        <dbReference type="ChEBI" id="CHEBI:57540"/>
        <dbReference type="ChEBI" id="CHEBI:57945"/>
        <dbReference type="EC" id="1.8.1.8"/>
    </reaction>
</comment>
<comment type="catalytic activity">
    <reaction>
        <text>[protein]-dithiol + NADP(+) = [protein]-disulfide + NADPH + H(+)</text>
        <dbReference type="Rhea" id="RHEA:18753"/>
        <dbReference type="Rhea" id="RHEA-COMP:10593"/>
        <dbReference type="Rhea" id="RHEA-COMP:10594"/>
        <dbReference type="ChEBI" id="CHEBI:15378"/>
        <dbReference type="ChEBI" id="CHEBI:29950"/>
        <dbReference type="ChEBI" id="CHEBI:50058"/>
        <dbReference type="ChEBI" id="CHEBI:57783"/>
        <dbReference type="ChEBI" id="CHEBI:58349"/>
        <dbReference type="EC" id="1.8.1.8"/>
    </reaction>
</comment>
<comment type="subunit">
    <text evidence="1">Associates with the phosphatase 2A holoenzyme. Interacts with PPP2CA; the interaction is direct. Interacts with DVL1 (via PDZ domain); the interaction is direct and regulated by oxidative stress (By similarity).</text>
</comment>
<comment type="subcellular location">
    <subcellularLocation>
        <location evidence="2">Cytoplasm</location>
        <location evidence="2">Cytosol</location>
    </subcellularLocation>
    <subcellularLocation>
        <location evidence="2">Nucleus</location>
    </subcellularLocation>
</comment>
<comment type="alternative products">
    <event type="alternative splicing"/>
    <isoform>
        <id>Q6DKJ4-1</id>
        <name>1</name>
        <sequence type="displayed"/>
    </isoform>
    <isoform>
        <id>Q6DKJ4-2</id>
        <name>2</name>
        <sequence type="described" ref="VSP_033392 VSP_033393 VSP_033394 VSP_033395"/>
    </isoform>
    <isoform>
        <id>Q6DKJ4-3</id>
        <name>3</name>
        <sequence type="described" ref="VSP_042792 VSP_042793"/>
    </isoform>
</comment>
<comment type="disease" evidence="4">
    <disease id="DI-05633">
        <name>Robinow syndrome, autosomal recessive 2</name>
        <acronym>RRS2</acronym>
        <description>A recessive form of Robinow syndrome, a disease characterized by short-limb dwarfism, costovertebral segmentation defects and abnormalities of the head, face and external genitalia. The clinical signs are generally far more severe in recessive cases, particularly skeletal abnormalities. All patients with the recessive form suffer from vertebral segmentation abnormalities, resulting in scoliosis and chest deformities. Rib fusions are considered to be characteristic of the autosomal recessive form. Patients can also present brachydactyly, with extensive aplasia/hypoplasia of the phalanges and metacarpals/metatarsals, and brachy-syn-polydactyly of the hands and oligodactyly of the feet.</description>
        <dbReference type="MIM" id="618529"/>
    </disease>
    <text>The disease is caused by variants affecting the gene represented in this entry.</text>
</comment>
<comment type="similarity">
    <text evidence="7">Belongs to the nucleoredoxin family.</text>
</comment>
<comment type="sequence caution" evidence="7">
    <conflict type="erroneous initiation">
        <sequence resource="EMBL-CDS" id="BAB14171"/>
    </conflict>
    <text>Truncated N-terminus.</text>
</comment>
<comment type="sequence caution" evidence="7">
    <conflict type="erroneous initiation">
        <sequence resource="EMBL-CDS" id="BAB55122"/>
    </conflict>
    <text>Truncated N-terminus.</text>
</comment>
<feature type="initiator methionine" description="Removed" evidence="8">
    <location>
        <position position="1"/>
    </location>
</feature>
<feature type="chain" id="PRO_0000332933" description="Nucleoredoxin">
    <location>
        <begin position="2"/>
        <end position="435"/>
    </location>
</feature>
<feature type="domain" description="Thioredoxin" evidence="3">
    <location>
        <begin position="167"/>
        <end position="321"/>
    </location>
</feature>
<feature type="modified residue" description="N-acetylserine" evidence="8">
    <location>
        <position position="2"/>
    </location>
</feature>
<feature type="splice variant" id="VSP_033392" description="In isoform 2." evidence="6">
    <location>
        <begin position="1"/>
        <end position="113"/>
    </location>
</feature>
<feature type="splice variant" id="VSP_042792" description="In isoform 3." evidence="5">
    <location>
        <begin position="1"/>
        <end position="108"/>
    </location>
</feature>
<feature type="splice variant" id="VSP_042793" description="In isoform 3." evidence="5">
    <original>WLALPYKEKHRK</original>
    <variation>MADVSLHRNPAT</variation>
    <location>
        <begin position="109"/>
        <end position="120"/>
    </location>
</feature>
<feature type="splice variant" id="VSP_033393" description="In isoform 2." evidence="6">
    <original>YKEKHRK</original>
    <variation>MQELRNS</variation>
    <location>
        <begin position="114"/>
        <end position="120"/>
    </location>
</feature>
<feature type="splice variant" id="VSP_033394" description="In isoform 2." evidence="6">
    <original>IPTLIMLDPQGEVITR</original>
    <variation>RRSRPRLRVAPGNLLT</variation>
    <location>
        <begin position="275"/>
        <end position="290"/>
    </location>
</feature>
<feature type="splice variant" id="VSP_033395" description="In isoform 2." evidence="6">
    <location>
        <begin position="291"/>
        <end position="435"/>
    </location>
</feature>
<feature type="sequence variant" id="VAR_083246" description="In RRS2." evidence="4">
    <location>
        <begin position="209"/>
        <end position="435"/>
    </location>
</feature>
<feature type="sequence variant" id="VAR_083247" description="In RRS2; uncertain significance; dbSNP:rs1555607285." evidence="4">
    <location>
        <position position="412"/>
    </location>
</feature>
<feature type="sequence conflict" description="In Ref. 1; BAB55122." evidence="7" ref="1">
    <original>W</original>
    <variation>K</variation>
    <location>
        <position position="124"/>
    </location>
</feature>
<feature type="sequence conflict" description="In Ref. 1; BAB14171." evidence="7" ref="1">
    <original>W</original>
    <variation>K</variation>
    <location>
        <position position="165"/>
    </location>
</feature>
<feature type="sequence conflict" description="In Ref. 4; AAH73845." evidence="7" ref="4">
    <original>V</original>
    <variation>I</variation>
    <location>
        <position position="372"/>
    </location>
</feature>
<dbReference type="EC" id="1.8.1.8"/>
<dbReference type="EMBL" id="AK022676">
    <property type="protein sequence ID" value="BAB14171.1"/>
    <property type="status" value="ALT_INIT"/>
    <property type="molecule type" value="mRNA"/>
</dbReference>
<dbReference type="EMBL" id="AK027451">
    <property type="protein sequence ID" value="BAB55122.1"/>
    <property type="status" value="ALT_INIT"/>
    <property type="molecule type" value="mRNA"/>
</dbReference>
<dbReference type="EMBL" id="AK302073">
    <property type="protein sequence ID" value="BAG63462.1"/>
    <property type="molecule type" value="mRNA"/>
</dbReference>
<dbReference type="EMBL" id="AC015884">
    <property type="status" value="NOT_ANNOTATED_CDS"/>
    <property type="molecule type" value="Genomic_DNA"/>
</dbReference>
<dbReference type="EMBL" id="AC036164">
    <property type="status" value="NOT_ANNOTATED_CDS"/>
    <property type="molecule type" value="Genomic_DNA"/>
</dbReference>
<dbReference type="EMBL" id="AC087392">
    <property type="status" value="NOT_ANNOTATED_CDS"/>
    <property type="molecule type" value="Genomic_DNA"/>
</dbReference>
<dbReference type="EMBL" id="CH471108">
    <property type="protein sequence ID" value="EAW90640.1"/>
    <property type="molecule type" value="Genomic_DNA"/>
</dbReference>
<dbReference type="EMBL" id="CH471108">
    <property type="protein sequence ID" value="EAW90641.1"/>
    <property type="molecule type" value="Genomic_DNA"/>
</dbReference>
<dbReference type="EMBL" id="BC009327">
    <property type="protein sequence ID" value="AAH09327.2"/>
    <property type="molecule type" value="mRNA"/>
</dbReference>
<dbReference type="EMBL" id="BC063828">
    <property type="protein sequence ID" value="AAH63828.1"/>
    <property type="molecule type" value="mRNA"/>
</dbReference>
<dbReference type="EMBL" id="BC073845">
    <property type="protein sequence ID" value="AAH73845.1"/>
    <property type="molecule type" value="mRNA"/>
</dbReference>
<dbReference type="EMBL" id="BC104634">
    <property type="protein sequence ID" value="AAI04635.1"/>
    <property type="molecule type" value="mRNA"/>
</dbReference>
<dbReference type="CCDS" id="CCDS10998.1">
    <molecule id="Q6DKJ4-1"/>
</dbReference>
<dbReference type="CCDS" id="CCDS56013.1">
    <molecule id="Q6DKJ4-3"/>
</dbReference>
<dbReference type="RefSeq" id="NP_001192248.1">
    <molecule id="Q6DKJ4-3"/>
    <property type="nucleotide sequence ID" value="NM_001205319.1"/>
</dbReference>
<dbReference type="RefSeq" id="NP_071908.2">
    <molecule id="Q6DKJ4-1"/>
    <property type="nucleotide sequence ID" value="NM_022463.4"/>
</dbReference>
<dbReference type="SMR" id="Q6DKJ4"/>
<dbReference type="BioGRID" id="122144">
    <property type="interactions" value="38"/>
</dbReference>
<dbReference type="FunCoup" id="Q6DKJ4">
    <property type="interactions" value="888"/>
</dbReference>
<dbReference type="IntAct" id="Q6DKJ4">
    <property type="interactions" value="15"/>
</dbReference>
<dbReference type="MINT" id="Q6DKJ4"/>
<dbReference type="STRING" id="9606.ENSP00000337443"/>
<dbReference type="GlyGen" id="Q6DKJ4">
    <property type="glycosylation" value="1 site, 1 O-linked glycan (1 site)"/>
</dbReference>
<dbReference type="iPTMnet" id="Q6DKJ4"/>
<dbReference type="MetOSite" id="Q6DKJ4"/>
<dbReference type="PhosphoSitePlus" id="Q6DKJ4"/>
<dbReference type="BioMuta" id="NXN"/>
<dbReference type="DMDM" id="187471109"/>
<dbReference type="jPOST" id="Q6DKJ4"/>
<dbReference type="MassIVE" id="Q6DKJ4"/>
<dbReference type="PaxDb" id="9606-ENSP00000337443"/>
<dbReference type="PeptideAtlas" id="Q6DKJ4"/>
<dbReference type="ProteomicsDB" id="66233">
    <molecule id="Q6DKJ4-1"/>
</dbReference>
<dbReference type="ProteomicsDB" id="66234">
    <molecule id="Q6DKJ4-2"/>
</dbReference>
<dbReference type="ProteomicsDB" id="66235">
    <molecule id="Q6DKJ4-3"/>
</dbReference>
<dbReference type="Pumba" id="Q6DKJ4"/>
<dbReference type="Antibodypedia" id="10317">
    <property type="antibodies" value="146 antibodies from 27 providers"/>
</dbReference>
<dbReference type="DNASU" id="64359"/>
<dbReference type="Ensembl" id="ENST00000336868.8">
    <molecule id="Q6DKJ4-1"/>
    <property type="protein sequence ID" value="ENSP00000337443.3"/>
    <property type="gene ID" value="ENSG00000167693.17"/>
</dbReference>
<dbReference type="Ensembl" id="ENST00000575801.5">
    <molecule id="Q6DKJ4-3"/>
    <property type="protein sequence ID" value="ENSP00000461038.1"/>
    <property type="gene ID" value="ENSG00000167693.17"/>
</dbReference>
<dbReference type="GeneID" id="64359"/>
<dbReference type="KEGG" id="hsa:64359"/>
<dbReference type="MANE-Select" id="ENST00000336868.8">
    <property type="protein sequence ID" value="ENSP00000337443.3"/>
    <property type="RefSeq nucleotide sequence ID" value="NM_022463.5"/>
    <property type="RefSeq protein sequence ID" value="NP_071908.2"/>
</dbReference>
<dbReference type="UCSC" id="uc002fsa.4">
    <molecule id="Q6DKJ4-1"/>
    <property type="organism name" value="human"/>
</dbReference>
<dbReference type="AGR" id="HGNC:18008"/>
<dbReference type="CTD" id="64359"/>
<dbReference type="DisGeNET" id="64359"/>
<dbReference type="GeneCards" id="NXN"/>
<dbReference type="HGNC" id="HGNC:18008">
    <property type="gene designation" value="NXN"/>
</dbReference>
<dbReference type="HPA" id="ENSG00000167693">
    <property type="expression patterns" value="Low tissue specificity"/>
</dbReference>
<dbReference type="MalaCards" id="NXN"/>
<dbReference type="MIM" id="612895">
    <property type="type" value="gene"/>
</dbReference>
<dbReference type="MIM" id="618529">
    <property type="type" value="phenotype"/>
</dbReference>
<dbReference type="neXtProt" id="NX_Q6DKJ4"/>
<dbReference type="OpenTargets" id="ENSG00000167693"/>
<dbReference type="Orphanet" id="1507">
    <property type="disease" value="Autosomal recessive Robinow syndrome"/>
</dbReference>
<dbReference type="PharmGKB" id="PA31863"/>
<dbReference type="VEuPathDB" id="HostDB:ENSG00000167693"/>
<dbReference type="eggNOG" id="KOG2501">
    <property type="taxonomic scope" value="Eukaryota"/>
</dbReference>
<dbReference type="GeneTree" id="ENSGT00940000161894"/>
<dbReference type="HOGENOM" id="CLU_019626_2_1_1"/>
<dbReference type="InParanoid" id="Q6DKJ4"/>
<dbReference type="OMA" id="NAPCRQF"/>
<dbReference type="OrthoDB" id="9440957at2759"/>
<dbReference type="PAN-GO" id="Q6DKJ4">
    <property type="GO annotations" value="4 GO annotations based on evolutionary models"/>
</dbReference>
<dbReference type="PhylomeDB" id="Q6DKJ4"/>
<dbReference type="TreeFam" id="TF331873"/>
<dbReference type="PathwayCommons" id="Q6DKJ4"/>
<dbReference type="SignaLink" id="Q6DKJ4"/>
<dbReference type="BioGRID-ORCS" id="64359">
    <property type="hits" value="10 hits in 1151 CRISPR screens"/>
</dbReference>
<dbReference type="ChiTaRS" id="NXN">
    <property type="organism name" value="human"/>
</dbReference>
<dbReference type="GenomeRNAi" id="64359"/>
<dbReference type="Pharos" id="Q6DKJ4">
    <property type="development level" value="Tbio"/>
</dbReference>
<dbReference type="PRO" id="PR:Q6DKJ4"/>
<dbReference type="Proteomes" id="UP000005640">
    <property type="component" value="Chromosome 17"/>
</dbReference>
<dbReference type="RNAct" id="Q6DKJ4">
    <property type="molecule type" value="protein"/>
</dbReference>
<dbReference type="Bgee" id="ENSG00000167693">
    <property type="expression patterns" value="Expressed in cervix squamous epithelium and 197 other cell types or tissues"/>
</dbReference>
<dbReference type="ExpressionAtlas" id="Q6DKJ4">
    <property type="expression patterns" value="baseline and differential"/>
</dbReference>
<dbReference type="GO" id="GO:0005829">
    <property type="term" value="C:cytosol"/>
    <property type="evidence" value="ECO:0007669"/>
    <property type="project" value="UniProtKB-SubCell"/>
</dbReference>
<dbReference type="GO" id="GO:0005634">
    <property type="term" value="C:nucleus"/>
    <property type="evidence" value="ECO:0000318"/>
    <property type="project" value="GO_Central"/>
</dbReference>
<dbReference type="GO" id="GO:0004791">
    <property type="term" value="F:thioredoxin-disulfide reductase (NADPH) activity"/>
    <property type="evidence" value="ECO:0000318"/>
    <property type="project" value="GO_Central"/>
</dbReference>
<dbReference type="GO" id="GO:0030154">
    <property type="term" value="P:cell differentiation"/>
    <property type="evidence" value="ECO:0007669"/>
    <property type="project" value="UniProtKB-KW"/>
</dbReference>
<dbReference type="GO" id="GO:0072359">
    <property type="term" value="P:circulatory system development"/>
    <property type="evidence" value="ECO:0000250"/>
    <property type="project" value="UniProtKB"/>
</dbReference>
<dbReference type="GO" id="GO:0001701">
    <property type="term" value="P:in utero embryonic development"/>
    <property type="evidence" value="ECO:0007669"/>
    <property type="project" value="Ensembl"/>
</dbReference>
<dbReference type="GO" id="GO:0031397">
    <property type="term" value="P:negative regulation of protein ubiquitination"/>
    <property type="evidence" value="ECO:0000250"/>
    <property type="project" value="UniProtKB"/>
</dbReference>
<dbReference type="GO" id="GO:0030178">
    <property type="term" value="P:negative regulation of Wnt signaling pathway"/>
    <property type="evidence" value="ECO:0000250"/>
    <property type="project" value="UniProtKB"/>
</dbReference>
<dbReference type="GO" id="GO:0016055">
    <property type="term" value="P:Wnt signaling pathway"/>
    <property type="evidence" value="ECO:0000315"/>
    <property type="project" value="UniProtKB"/>
</dbReference>
<dbReference type="CDD" id="cd03071">
    <property type="entry name" value="PDI_b'_NRX"/>
    <property type="match status" value="1"/>
</dbReference>
<dbReference type="CDD" id="cd03009">
    <property type="entry name" value="TryX_like_TryX_NRX"/>
    <property type="match status" value="1"/>
</dbReference>
<dbReference type="FunFam" id="3.40.30.10:FF:000062">
    <property type="entry name" value="Nucleoredoxin"/>
    <property type="match status" value="1"/>
</dbReference>
<dbReference type="FunFam" id="3.40.30.10:FF:000064">
    <property type="entry name" value="Nucleoredoxin"/>
    <property type="match status" value="1"/>
</dbReference>
<dbReference type="FunFam" id="3.40.30.10:FF:000210">
    <property type="entry name" value="nucleoredoxin"/>
    <property type="match status" value="1"/>
</dbReference>
<dbReference type="Gene3D" id="3.40.30.10">
    <property type="entry name" value="Glutaredoxin"/>
    <property type="match status" value="3"/>
</dbReference>
<dbReference type="InterPro" id="IPR041861">
    <property type="entry name" value="NRX_PDI_b"/>
</dbReference>
<dbReference type="InterPro" id="IPR012336">
    <property type="entry name" value="Thioredoxin-like_fold"/>
</dbReference>
<dbReference type="InterPro" id="IPR036249">
    <property type="entry name" value="Thioredoxin-like_sf"/>
</dbReference>
<dbReference type="InterPro" id="IPR013766">
    <property type="entry name" value="Thioredoxin_domain"/>
</dbReference>
<dbReference type="InterPro" id="IPR045870">
    <property type="entry name" value="TryX_NRX_thioredoxin_dom"/>
</dbReference>
<dbReference type="PANTHER" id="PTHR46472">
    <property type="entry name" value="NUCLEOREDOXIN"/>
    <property type="match status" value="1"/>
</dbReference>
<dbReference type="PANTHER" id="PTHR46472:SF1">
    <property type="entry name" value="NUCLEOREDOXIN"/>
    <property type="match status" value="1"/>
</dbReference>
<dbReference type="Pfam" id="PF13848">
    <property type="entry name" value="Thioredoxin_6"/>
    <property type="match status" value="1"/>
</dbReference>
<dbReference type="Pfam" id="PF13905">
    <property type="entry name" value="Thioredoxin_8"/>
    <property type="match status" value="2"/>
</dbReference>
<dbReference type="SUPFAM" id="SSF52833">
    <property type="entry name" value="Thioredoxin-like"/>
    <property type="match status" value="3"/>
</dbReference>
<dbReference type="PROSITE" id="PS51352">
    <property type="entry name" value="THIOREDOXIN_2"/>
    <property type="match status" value="1"/>
</dbReference>
<proteinExistence type="evidence at protein level"/>
<name>NXN_HUMAN</name>
<protein>
    <recommendedName>
        <fullName>Nucleoredoxin</fullName>
        <ecNumber>1.8.1.8</ecNumber>
    </recommendedName>
</protein>
<sequence>MSGFLEELLGEKLVTGGGEEVDVHSLGARGISLLGLYFGCSLSAPCAQLSASLAAFYGRLRGDAAAGPGPGAGAGAAAEPEPRRRLEIVFVSSDQDQRQWQDFVRDMPWLALPYKEKHRKLKLWNKYRISNIPSLIFLDATTGKVVCRNGLLVIRDDPEGLEFPWGPKPFREVIAGPLLRNNGQSLESSSLEGSHVGVYFSAHWCPPCRSLTRVLVESYRKIKEAGQNFEIIFVSADRSEESFKQYFSEMPWLAVPYTDEARRSRLNRLYGIQGIPTLIMLDPQGEVITRQGRVEVLNDEDCREFPWHPKPVLELSDSNAAQLNEGPCLVLFVDSEDDGESEAAKQLIQPIAEKIIAKYKAKEEEAPLLFFVAGEDDMTDSLRDYTNLPEAAPLLTILDMSARAKYVMDVEEITPAIVEAFVNDFLAEKLKPEPI</sequence>
<reference key="1">
    <citation type="journal article" date="2004" name="Nat. Genet.">
        <title>Complete sequencing and characterization of 21,243 full-length human cDNAs.</title>
        <authorList>
            <person name="Ota T."/>
            <person name="Suzuki Y."/>
            <person name="Nishikawa T."/>
            <person name="Otsuki T."/>
            <person name="Sugiyama T."/>
            <person name="Irie R."/>
            <person name="Wakamatsu A."/>
            <person name="Hayashi K."/>
            <person name="Sato H."/>
            <person name="Nagai K."/>
            <person name="Kimura K."/>
            <person name="Makita H."/>
            <person name="Sekine M."/>
            <person name="Obayashi M."/>
            <person name="Nishi T."/>
            <person name="Shibahara T."/>
            <person name="Tanaka T."/>
            <person name="Ishii S."/>
            <person name="Yamamoto J."/>
            <person name="Saito K."/>
            <person name="Kawai Y."/>
            <person name="Isono Y."/>
            <person name="Nakamura Y."/>
            <person name="Nagahari K."/>
            <person name="Murakami K."/>
            <person name="Yasuda T."/>
            <person name="Iwayanagi T."/>
            <person name="Wagatsuma M."/>
            <person name="Shiratori A."/>
            <person name="Sudo H."/>
            <person name="Hosoiri T."/>
            <person name="Kaku Y."/>
            <person name="Kodaira H."/>
            <person name="Kondo H."/>
            <person name="Sugawara M."/>
            <person name="Takahashi M."/>
            <person name="Kanda K."/>
            <person name="Yokoi T."/>
            <person name="Furuya T."/>
            <person name="Kikkawa E."/>
            <person name="Omura Y."/>
            <person name="Abe K."/>
            <person name="Kamihara K."/>
            <person name="Katsuta N."/>
            <person name="Sato K."/>
            <person name="Tanikawa M."/>
            <person name="Yamazaki M."/>
            <person name="Ninomiya K."/>
            <person name="Ishibashi T."/>
            <person name="Yamashita H."/>
            <person name="Murakawa K."/>
            <person name="Fujimori K."/>
            <person name="Tanai H."/>
            <person name="Kimata M."/>
            <person name="Watanabe M."/>
            <person name="Hiraoka S."/>
            <person name="Chiba Y."/>
            <person name="Ishida S."/>
            <person name="Ono Y."/>
            <person name="Takiguchi S."/>
            <person name="Watanabe S."/>
            <person name="Yosida M."/>
            <person name="Hotuta T."/>
            <person name="Kusano J."/>
            <person name="Kanehori K."/>
            <person name="Takahashi-Fujii A."/>
            <person name="Hara H."/>
            <person name="Tanase T.-O."/>
            <person name="Nomura Y."/>
            <person name="Togiya S."/>
            <person name="Komai F."/>
            <person name="Hara R."/>
            <person name="Takeuchi K."/>
            <person name="Arita M."/>
            <person name="Imose N."/>
            <person name="Musashino K."/>
            <person name="Yuuki H."/>
            <person name="Oshima A."/>
            <person name="Sasaki N."/>
            <person name="Aotsuka S."/>
            <person name="Yoshikawa Y."/>
            <person name="Matsunawa H."/>
            <person name="Ichihara T."/>
            <person name="Shiohata N."/>
            <person name="Sano S."/>
            <person name="Moriya S."/>
            <person name="Momiyama H."/>
            <person name="Satoh N."/>
            <person name="Takami S."/>
            <person name="Terashima Y."/>
            <person name="Suzuki O."/>
            <person name="Nakagawa S."/>
            <person name="Senoh A."/>
            <person name="Mizoguchi H."/>
            <person name="Goto Y."/>
            <person name="Shimizu F."/>
            <person name="Wakebe H."/>
            <person name="Hishigaki H."/>
            <person name="Watanabe T."/>
            <person name="Sugiyama A."/>
            <person name="Takemoto M."/>
            <person name="Kawakami B."/>
            <person name="Yamazaki M."/>
            <person name="Watanabe K."/>
            <person name="Kumagai A."/>
            <person name="Itakura S."/>
            <person name="Fukuzumi Y."/>
            <person name="Fujimori Y."/>
            <person name="Komiyama M."/>
            <person name="Tashiro H."/>
            <person name="Tanigami A."/>
            <person name="Fujiwara T."/>
            <person name="Ono T."/>
            <person name="Yamada K."/>
            <person name="Fujii Y."/>
            <person name="Ozaki K."/>
            <person name="Hirao M."/>
            <person name="Ohmori Y."/>
            <person name="Kawabata A."/>
            <person name="Hikiji T."/>
            <person name="Kobatake N."/>
            <person name="Inagaki H."/>
            <person name="Ikema Y."/>
            <person name="Okamoto S."/>
            <person name="Okitani R."/>
            <person name="Kawakami T."/>
            <person name="Noguchi S."/>
            <person name="Itoh T."/>
            <person name="Shigeta K."/>
            <person name="Senba T."/>
            <person name="Matsumura K."/>
            <person name="Nakajima Y."/>
            <person name="Mizuno T."/>
            <person name="Morinaga M."/>
            <person name="Sasaki M."/>
            <person name="Togashi T."/>
            <person name="Oyama M."/>
            <person name="Hata H."/>
            <person name="Watanabe M."/>
            <person name="Komatsu T."/>
            <person name="Mizushima-Sugano J."/>
            <person name="Satoh T."/>
            <person name="Shirai Y."/>
            <person name="Takahashi Y."/>
            <person name="Nakagawa K."/>
            <person name="Okumura K."/>
            <person name="Nagase T."/>
            <person name="Nomura N."/>
            <person name="Kikuchi H."/>
            <person name="Masuho Y."/>
            <person name="Yamashita R."/>
            <person name="Nakai K."/>
            <person name="Yada T."/>
            <person name="Nakamura Y."/>
            <person name="Ohara O."/>
            <person name="Isogai T."/>
            <person name="Sugano S."/>
        </authorList>
    </citation>
    <scope>NUCLEOTIDE SEQUENCE [LARGE SCALE MRNA] (ISOFORM 3)</scope>
    <scope>NUCLEOTIDE SEQUENCE [LARGE SCALE MRNA] OF 124-435 (ISOFORM 1)</scope>
    <source>
        <tissue>Teratocarcinoma</tissue>
        <tissue>Testis</tissue>
    </source>
</reference>
<reference key="2">
    <citation type="journal article" date="2006" name="Nature">
        <title>DNA sequence of human chromosome 17 and analysis of rearrangement in the human lineage.</title>
        <authorList>
            <person name="Zody M.C."/>
            <person name="Garber M."/>
            <person name="Adams D.J."/>
            <person name="Sharpe T."/>
            <person name="Harrow J."/>
            <person name="Lupski J.R."/>
            <person name="Nicholson C."/>
            <person name="Searle S.M."/>
            <person name="Wilming L."/>
            <person name="Young S.K."/>
            <person name="Abouelleil A."/>
            <person name="Allen N.R."/>
            <person name="Bi W."/>
            <person name="Bloom T."/>
            <person name="Borowsky M.L."/>
            <person name="Bugalter B.E."/>
            <person name="Butler J."/>
            <person name="Chang J.L."/>
            <person name="Chen C.-K."/>
            <person name="Cook A."/>
            <person name="Corum B."/>
            <person name="Cuomo C.A."/>
            <person name="de Jong P.J."/>
            <person name="DeCaprio D."/>
            <person name="Dewar K."/>
            <person name="FitzGerald M."/>
            <person name="Gilbert J."/>
            <person name="Gibson R."/>
            <person name="Gnerre S."/>
            <person name="Goldstein S."/>
            <person name="Grafham D.V."/>
            <person name="Grocock R."/>
            <person name="Hafez N."/>
            <person name="Hagopian D.S."/>
            <person name="Hart E."/>
            <person name="Norman C.H."/>
            <person name="Humphray S."/>
            <person name="Jaffe D.B."/>
            <person name="Jones M."/>
            <person name="Kamal M."/>
            <person name="Khodiyar V.K."/>
            <person name="LaButti K."/>
            <person name="Laird G."/>
            <person name="Lehoczky J."/>
            <person name="Liu X."/>
            <person name="Lokyitsang T."/>
            <person name="Loveland J."/>
            <person name="Lui A."/>
            <person name="Macdonald P."/>
            <person name="Major J.E."/>
            <person name="Matthews L."/>
            <person name="Mauceli E."/>
            <person name="McCarroll S.A."/>
            <person name="Mihalev A.H."/>
            <person name="Mudge J."/>
            <person name="Nguyen C."/>
            <person name="Nicol R."/>
            <person name="O'Leary S.B."/>
            <person name="Osoegawa K."/>
            <person name="Schwartz D.C."/>
            <person name="Shaw-Smith C."/>
            <person name="Stankiewicz P."/>
            <person name="Steward C."/>
            <person name="Swarbreck D."/>
            <person name="Venkataraman V."/>
            <person name="Whittaker C.A."/>
            <person name="Yang X."/>
            <person name="Zimmer A.R."/>
            <person name="Bradley A."/>
            <person name="Hubbard T."/>
            <person name="Birren B.W."/>
            <person name="Rogers J."/>
            <person name="Lander E.S."/>
            <person name="Nusbaum C."/>
        </authorList>
    </citation>
    <scope>NUCLEOTIDE SEQUENCE [LARGE SCALE GENOMIC DNA]</scope>
</reference>
<reference key="3">
    <citation type="submission" date="2005-09" db="EMBL/GenBank/DDBJ databases">
        <authorList>
            <person name="Mural R.J."/>
            <person name="Istrail S."/>
            <person name="Sutton G.G."/>
            <person name="Florea L."/>
            <person name="Halpern A.L."/>
            <person name="Mobarry C.M."/>
            <person name="Lippert R."/>
            <person name="Walenz B."/>
            <person name="Shatkay H."/>
            <person name="Dew I."/>
            <person name="Miller J.R."/>
            <person name="Flanigan M.J."/>
            <person name="Edwards N.J."/>
            <person name="Bolanos R."/>
            <person name="Fasulo D."/>
            <person name="Halldorsson B.V."/>
            <person name="Hannenhalli S."/>
            <person name="Turner R."/>
            <person name="Yooseph S."/>
            <person name="Lu F."/>
            <person name="Nusskern D.R."/>
            <person name="Shue B.C."/>
            <person name="Zheng X.H."/>
            <person name="Zhong F."/>
            <person name="Delcher A.L."/>
            <person name="Huson D.H."/>
            <person name="Kravitz S.A."/>
            <person name="Mouchard L."/>
            <person name="Reinert K."/>
            <person name="Remington K.A."/>
            <person name="Clark A.G."/>
            <person name="Waterman M.S."/>
            <person name="Eichler E.E."/>
            <person name="Adams M.D."/>
            <person name="Hunkapiller M.W."/>
            <person name="Myers E.W."/>
            <person name="Venter J.C."/>
        </authorList>
    </citation>
    <scope>NUCLEOTIDE SEQUENCE [LARGE SCALE GENOMIC DNA]</scope>
</reference>
<reference key="4">
    <citation type="journal article" date="2004" name="Genome Res.">
        <title>The status, quality, and expansion of the NIH full-length cDNA project: the Mammalian Gene Collection (MGC).</title>
        <authorList>
            <consortium name="The MGC Project Team"/>
        </authorList>
    </citation>
    <scope>NUCLEOTIDE SEQUENCE [LARGE SCALE MRNA] (ISOFORM 2)</scope>
    <scope>PARTIAL NUCLEOTIDE SEQUENCE [LARGE SCALE MRNA] (ISOFORM 3)</scope>
    <scope>NUCLEOTIDE SEQUENCE [LARGE SCALE MRNA] OF 171-435 (ISOFORM 1)</scope>
    <source>
        <tissue>Brain</tissue>
        <tissue>Liver</tissue>
        <tissue>Lung</tissue>
        <tissue>Uterus</tissue>
    </source>
</reference>
<reference key="5">
    <citation type="journal article" date="2006" name="FEBS Lett.">
        <title>Interaction of nucleoredoxin with protein phosphatase 2A.</title>
        <authorList>
            <person name="Lechward K."/>
            <person name="Sugajska E."/>
            <person name="de Baere I."/>
            <person name="Goris J."/>
            <person name="Hemmings B.A."/>
            <person name="Zolnierowicz S."/>
        </authorList>
    </citation>
    <scope>IDENTIFICATION IN A COMPLEX WITH PHOSPHATASE 2A</scope>
</reference>
<reference key="6">
    <citation type="journal article" date="2009" name="Anal. Chem.">
        <title>Lys-N and trypsin cover complementary parts of the phosphoproteome in a refined SCX-based approach.</title>
        <authorList>
            <person name="Gauci S."/>
            <person name="Helbig A.O."/>
            <person name="Slijper M."/>
            <person name="Krijgsveld J."/>
            <person name="Heck A.J."/>
            <person name="Mohammed S."/>
        </authorList>
    </citation>
    <scope>ACETYLATION [LARGE SCALE ANALYSIS] AT SER-2</scope>
    <scope>CLEAVAGE OF INITIATOR METHIONINE [LARGE SCALE ANALYSIS]</scope>
    <scope>IDENTIFICATION BY MASS SPECTROMETRY [LARGE SCALE ANALYSIS]</scope>
</reference>
<reference key="7">
    <citation type="journal article" date="2011" name="BMC Syst. Biol.">
        <title>Initial characterization of the human central proteome.</title>
        <authorList>
            <person name="Burkard T.R."/>
            <person name="Planyavsky M."/>
            <person name="Kaupe I."/>
            <person name="Breitwieser F.P."/>
            <person name="Buerckstuemmer T."/>
            <person name="Bennett K.L."/>
            <person name="Superti-Furga G."/>
            <person name="Colinge J."/>
        </authorList>
    </citation>
    <scope>IDENTIFICATION BY MASS SPECTROMETRY [LARGE SCALE ANALYSIS]</scope>
</reference>
<reference key="8">
    <citation type="journal article" date="2018" name="Am. J. Hum. Genet.">
        <title>WNT signaling perturbations underlie the genetic heterogeneity of Robinow syndrome.</title>
        <authorList>
            <consortium name="Baylor-Hopkins Center for Mendelian Genomics"/>
            <person name="White J.J."/>
            <person name="Mazzeu J.F."/>
            <person name="Coban-Akdemir Z."/>
            <person name="Bayram Y."/>
            <person name="Bahrambeigi V."/>
            <person name="Hoischen A."/>
            <person name="van Bon B.W.M."/>
            <person name="Gezdirici A."/>
            <person name="Gulec E.Y."/>
            <person name="Ramond F."/>
            <person name="Touraine R."/>
            <person name="Thevenon J."/>
            <person name="Shinawi M."/>
            <person name="Beaver E."/>
            <person name="Heeley J."/>
            <person name="Hoover-Fong J."/>
            <person name="Durmaz C.D."/>
            <person name="Karabulut H.G."/>
            <person name="Marzioglu-Ozdemir E."/>
            <person name="Cayir A."/>
            <person name="Duz M.B."/>
            <person name="Seven M."/>
            <person name="Price S."/>
            <person name="Ferreira B.M."/>
            <person name="Vianna-Morgante A.M."/>
            <person name="Ellard S."/>
            <person name="Parrish A."/>
            <person name="Stals K."/>
            <person name="Flores-Daboub J."/>
            <person name="Jhangiani S.N."/>
            <person name="Gibbs R.A."/>
            <person name="Brunner H.G."/>
            <person name="Sutton V.R."/>
            <person name="Lupski J.R."/>
            <person name="Carvalho C.M.B."/>
        </authorList>
    </citation>
    <scope>INVOLVEMENT IN RRS2</scope>
    <scope>VARIANTS RRS2 209-ARG--ILE-435 DEL AND GLU-412 DEL</scope>
</reference>